<protein>
    <recommendedName>
        <fullName>HTH-type transcriptional regulator GltR</fullName>
    </recommendedName>
</protein>
<dbReference type="EMBL" id="U79494">
    <property type="protein sequence ID" value="AAB47963.1"/>
    <property type="molecule type" value="Genomic_DNA"/>
</dbReference>
<dbReference type="EMBL" id="U93876">
    <property type="protein sequence ID" value="AAB80905.1"/>
    <property type="molecule type" value="Genomic_DNA"/>
</dbReference>
<dbReference type="EMBL" id="AL009126">
    <property type="protein sequence ID" value="CAB14608.2"/>
    <property type="molecule type" value="Genomic_DNA"/>
</dbReference>
<dbReference type="PIR" id="C69635">
    <property type="entry name" value="C69635"/>
</dbReference>
<dbReference type="RefSeq" id="NP_390544.2">
    <property type="nucleotide sequence ID" value="NC_000964.3"/>
</dbReference>
<dbReference type="RefSeq" id="WP_003246132.1">
    <property type="nucleotide sequence ID" value="NZ_OZ025638.1"/>
</dbReference>
<dbReference type="SMR" id="P94501"/>
<dbReference type="FunCoup" id="P94501">
    <property type="interactions" value="242"/>
</dbReference>
<dbReference type="STRING" id="224308.BSU26670"/>
<dbReference type="PaxDb" id="224308-BSU26670"/>
<dbReference type="DNASU" id="938189"/>
<dbReference type="EnsemblBacteria" id="CAB14608">
    <property type="protein sequence ID" value="CAB14608"/>
    <property type="gene ID" value="BSU_26670"/>
</dbReference>
<dbReference type="GeneID" id="938189"/>
<dbReference type="KEGG" id="bsu:BSU26670"/>
<dbReference type="PATRIC" id="fig|224308.179.peg.2898"/>
<dbReference type="eggNOG" id="COG0583">
    <property type="taxonomic scope" value="Bacteria"/>
</dbReference>
<dbReference type="InParanoid" id="P94501"/>
<dbReference type="OrthoDB" id="8479357at2"/>
<dbReference type="PhylomeDB" id="P94501"/>
<dbReference type="BioCyc" id="BSUB:BSU26670-MONOMER"/>
<dbReference type="PRO" id="PR:P94501"/>
<dbReference type="Proteomes" id="UP000001570">
    <property type="component" value="Chromosome"/>
</dbReference>
<dbReference type="GO" id="GO:0003700">
    <property type="term" value="F:DNA-binding transcription factor activity"/>
    <property type="evidence" value="ECO:0007669"/>
    <property type="project" value="InterPro"/>
</dbReference>
<dbReference type="GO" id="GO:0000976">
    <property type="term" value="F:transcription cis-regulatory region binding"/>
    <property type="evidence" value="ECO:0000318"/>
    <property type="project" value="GO_Central"/>
</dbReference>
<dbReference type="GO" id="GO:0006537">
    <property type="term" value="P:glutamate biosynthetic process"/>
    <property type="evidence" value="ECO:0007669"/>
    <property type="project" value="UniProtKB-KW"/>
</dbReference>
<dbReference type="GO" id="GO:0006355">
    <property type="term" value="P:regulation of DNA-templated transcription"/>
    <property type="evidence" value="ECO:0000318"/>
    <property type="project" value="GO_Central"/>
</dbReference>
<dbReference type="CDD" id="cd08442">
    <property type="entry name" value="PBP2_YofA_SoxR_like"/>
    <property type="match status" value="1"/>
</dbReference>
<dbReference type="FunFam" id="1.10.10.10:FF:000001">
    <property type="entry name" value="LysR family transcriptional regulator"/>
    <property type="match status" value="1"/>
</dbReference>
<dbReference type="Gene3D" id="3.40.190.290">
    <property type="match status" value="1"/>
</dbReference>
<dbReference type="Gene3D" id="1.10.10.10">
    <property type="entry name" value="Winged helix-like DNA-binding domain superfamily/Winged helix DNA-binding domain"/>
    <property type="match status" value="1"/>
</dbReference>
<dbReference type="InterPro" id="IPR005119">
    <property type="entry name" value="LysR_subst-bd"/>
</dbReference>
<dbReference type="InterPro" id="IPR000847">
    <property type="entry name" value="Tscrpt_reg_HTH_LysR"/>
</dbReference>
<dbReference type="InterPro" id="IPR036388">
    <property type="entry name" value="WH-like_DNA-bd_sf"/>
</dbReference>
<dbReference type="InterPro" id="IPR036390">
    <property type="entry name" value="WH_DNA-bd_sf"/>
</dbReference>
<dbReference type="PANTHER" id="PTHR30126">
    <property type="entry name" value="HTH-TYPE TRANSCRIPTIONAL REGULATOR"/>
    <property type="match status" value="1"/>
</dbReference>
<dbReference type="PANTHER" id="PTHR30126:SF40">
    <property type="entry name" value="HTH-TYPE TRANSCRIPTIONAL REGULATOR GLTR"/>
    <property type="match status" value="1"/>
</dbReference>
<dbReference type="Pfam" id="PF00126">
    <property type="entry name" value="HTH_1"/>
    <property type="match status" value="1"/>
</dbReference>
<dbReference type="Pfam" id="PF03466">
    <property type="entry name" value="LysR_substrate"/>
    <property type="match status" value="1"/>
</dbReference>
<dbReference type="SUPFAM" id="SSF53850">
    <property type="entry name" value="Periplasmic binding protein-like II"/>
    <property type="match status" value="1"/>
</dbReference>
<dbReference type="SUPFAM" id="SSF46785">
    <property type="entry name" value="Winged helix' DNA-binding domain"/>
    <property type="match status" value="1"/>
</dbReference>
<dbReference type="PROSITE" id="PS50931">
    <property type="entry name" value="HTH_LYSR"/>
    <property type="match status" value="1"/>
</dbReference>
<evidence type="ECO:0000255" key="1">
    <source>
        <dbReference type="PROSITE-ProRule" id="PRU00253"/>
    </source>
</evidence>
<evidence type="ECO:0000269" key="2">
    <source>
    </source>
</evidence>
<evidence type="ECO:0000305" key="3"/>
<comment type="function">
    <text evidence="2">Positive regulator of glutamate biosynthesis (gltAB genes). Negatively regulates its own expression.</text>
</comment>
<comment type="disruption phenotype">
    <text evidence="2">No effect observed.</text>
</comment>
<comment type="similarity">
    <text evidence="3">Belongs to the LysR transcriptional regulatory family.</text>
</comment>
<feature type="chain" id="PRO_0000105630" description="HTH-type transcriptional regulator GltR">
    <location>
        <begin position="1"/>
        <end position="296"/>
    </location>
</feature>
<feature type="domain" description="HTH lysR-type" evidence="1">
    <location>
        <begin position="1"/>
        <end position="58"/>
    </location>
</feature>
<feature type="DNA-binding region" description="H-T-H motif" evidence="1">
    <location>
        <begin position="18"/>
        <end position="37"/>
    </location>
</feature>
<feature type="mutagenesis site" description="Gain-of-function mutation." evidence="2">
    <original>L</original>
    <variation>P</variation>
    <location>
        <position position="219"/>
    </location>
</feature>
<feature type="sequence conflict" description="In Ref. 2; AAB80905." evidence="3" ref="2">
    <original>L</original>
    <variation>V</variation>
    <location>
        <position position="187"/>
    </location>
</feature>
<name>GLTR_BACSU</name>
<proteinExistence type="evidence at protein level"/>
<accession>P94501</accession>
<accession>O07083</accession>
<gene>
    <name type="primary">gltR</name>
    <name type="synonym">yrdL</name>
    <name type="ordered locus">BSU26670</name>
</gene>
<keyword id="KW-0010">Activator</keyword>
<keyword id="KW-0028">Amino-acid biosynthesis</keyword>
<keyword id="KW-0238">DNA-binding</keyword>
<keyword id="KW-0314">Glutamate biosynthesis</keyword>
<keyword id="KW-1185">Reference proteome</keyword>
<keyword id="KW-0678">Repressor</keyword>
<keyword id="KW-0804">Transcription</keyword>
<keyword id="KW-0805">Transcription regulation</keyword>
<reference key="1">
    <citation type="journal article" date="1997" name="J. Bacteriol.">
        <title>Altered transcription activation specificity of a mutant form of Bacillus subtilis GltR, a LysR family member.</title>
        <authorList>
            <person name="Belitsky B.R."/>
            <person name="Sonenshein A.L."/>
        </authorList>
    </citation>
    <scope>NUCLEOTIDE SEQUENCE [GENOMIC DNA]</scope>
    <scope>FUNCTION</scope>
    <scope>REGULATION</scope>
    <scope>MUTAGENESIS OF LEU-219</scope>
    <scope>DISRUPTION PHENOTYPE</scope>
    <source>
        <strain>168 / SMY</strain>
    </source>
</reference>
<reference key="2">
    <citation type="journal article" date="1997" name="Microbiology">
        <title>Sequence of the Bacillus subtilis genome region in the vicinity of the lev operon reveals two new extracytoplasmic function RNA polymerase sigma factors SigV and SigZ.</title>
        <authorList>
            <person name="Sorokin A."/>
            <person name="Bolotin A."/>
            <person name="Purnelle B."/>
            <person name="Hilbert H."/>
            <person name="Lauber J."/>
            <person name="Duesterhoeft A."/>
            <person name="Ehrlich S.D."/>
        </authorList>
    </citation>
    <scope>NUCLEOTIDE SEQUENCE [GENOMIC DNA]</scope>
    <source>
        <strain>168</strain>
    </source>
</reference>
<reference key="3">
    <citation type="journal article" date="1997" name="Nature">
        <title>The complete genome sequence of the Gram-positive bacterium Bacillus subtilis.</title>
        <authorList>
            <person name="Kunst F."/>
            <person name="Ogasawara N."/>
            <person name="Moszer I."/>
            <person name="Albertini A.M."/>
            <person name="Alloni G."/>
            <person name="Azevedo V."/>
            <person name="Bertero M.G."/>
            <person name="Bessieres P."/>
            <person name="Bolotin A."/>
            <person name="Borchert S."/>
            <person name="Borriss R."/>
            <person name="Boursier L."/>
            <person name="Brans A."/>
            <person name="Braun M."/>
            <person name="Brignell S.C."/>
            <person name="Bron S."/>
            <person name="Brouillet S."/>
            <person name="Bruschi C.V."/>
            <person name="Caldwell B."/>
            <person name="Capuano V."/>
            <person name="Carter N.M."/>
            <person name="Choi S.-K."/>
            <person name="Codani J.-J."/>
            <person name="Connerton I.F."/>
            <person name="Cummings N.J."/>
            <person name="Daniel R.A."/>
            <person name="Denizot F."/>
            <person name="Devine K.M."/>
            <person name="Duesterhoeft A."/>
            <person name="Ehrlich S.D."/>
            <person name="Emmerson P.T."/>
            <person name="Entian K.-D."/>
            <person name="Errington J."/>
            <person name="Fabret C."/>
            <person name="Ferrari E."/>
            <person name="Foulger D."/>
            <person name="Fritz C."/>
            <person name="Fujita M."/>
            <person name="Fujita Y."/>
            <person name="Fuma S."/>
            <person name="Galizzi A."/>
            <person name="Galleron N."/>
            <person name="Ghim S.-Y."/>
            <person name="Glaser P."/>
            <person name="Goffeau A."/>
            <person name="Golightly E.J."/>
            <person name="Grandi G."/>
            <person name="Guiseppi G."/>
            <person name="Guy B.J."/>
            <person name="Haga K."/>
            <person name="Haiech J."/>
            <person name="Harwood C.R."/>
            <person name="Henaut A."/>
            <person name="Hilbert H."/>
            <person name="Holsappel S."/>
            <person name="Hosono S."/>
            <person name="Hullo M.-F."/>
            <person name="Itaya M."/>
            <person name="Jones L.-M."/>
            <person name="Joris B."/>
            <person name="Karamata D."/>
            <person name="Kasahara Y."/>
            <person name="Klaerr-Blanchard M."/>
            <person name="Klein C."/>
            <person name="Kobayashi Y."/>
            <person name="Koetter P."/>
            <person name="Koningstein G."/>
            <person name="Krogh S."/>
            <person name="Kumano M."/>
            <person name="Kurita K."/>
            <person name="Lapidus A."/>
            <person name="Lardinois S."/>
            <person name="Lauber J."/>
            <person name="Lazarevic V."/>
            <person name="Lee S.-M."/>
            <person name="Levine A."/>
            <person name="Liu H."/>
            <person name="Masuda S."/>
            <person name="Mauel C."/>
            <person name="Medigue C."/>
            <person name="Medina N."/>
            <person name="Mellado R.P."/>
            <person name="Mizuno M."/>
            <person name="Moestl D."/>
            <person name="Nakai S."/>
            <person name="Noback M."/>
            <person name="Noone D."/>
            <person name="O'Reilly M."/>
            <person name="Ogawa K."/>
            <person name="Ogiwara A."/>
            <person name="Oudega B."/>
            <person name="Park S.-H."/>
            <person name="Parro V."/>
            <person name="Pohl T.M."/>
            <person name="Portetelle D."/>
            <person name="Porwollik S."/>
            <person name="Prescott A.M."/>
            <person name="Presecan E."/>
            <person name="Pujic P."/>
            <person name="Purnelle B."/>
            <person name="Rapoport G."/>
            <person name="Rey M."/>
            <person name="Reynolds S."/>
            <person name="Rieger M."/>
            <person name="Rivolta C."/>
            <person name="Rocha E."/>
            <person name="Roche B."/>
            <person name="Rose M."/>
            <person name="Sadaie Y."/>
            <person name="Sato T."/>
            <person name="Scanlan E."/>
            <person name="Schleich S."/>
            <person name="Schroeter R."/>
            <person name="Scoffone F."/>
            <person name="Sekiguchi J."/>
            <person name="Sekowska A."/>
            <person name="Seror S.J."/>
            <person name="Serror P."/>
            <person name="Shin B.-S."/>
            <person name="Soldo B."/>
            <person name="Sorokin A."/>
            <person name="Tacconi E."/>
            <person name="Takagi T."/>
            <person name="Takahashi H."/>
            <person name="Takemaru K."/>
            <person name="Takeuchi M."/>
            <person name="Tamakoshi A."/>
            <person name="Tanaka T."/>
            <person name="Terpstra P."/>
            <person name="Tognoni A."/>
            <person name="Tosato V."/>
            <person name="Uchiyama S."/>
            <person name="Vandenbol M."/>
            <person name="Vannier F."/>
            <person name="Vassarotti A."/>
            <person name="Viari A."/>
            <person name="Wambutt R."/>
            <person name="Wedler E."/>
            <person name="Wedler H."/>
            <person name="Weitzenegger T."/>
            <person name="Winters P."/>
            <person name="Wipat A."/>
            <person name="Yamamoto H."/>
            <person name="Yamane K."/>
            <person name="Yasumoto K."/>
            <person name="Yata K."/>
            <person name="Yoshida K."/>
            <person name="Yoshikawa H.-F."/>
            <person name="Zumstein E."/>
            <person name="Yoshikawa H."/>
            <person name="Danchin A."/>
        </authorList>
    </citation>
    <scope>NUCLEOTIDE SEQUENCE [LARGE SCALE GENOMIC DNA]</scope>
    <source>
        <strain>168</strain>
    </source>
</reference>
<reference key="4">
    <citation type="journal article" date="2009" name="Microbiology">
        <title>From a consortium sequence to a unified sequence: the Bacillus subtilis 168 reference genome a decade later.</title>
        <authorList>
            <person name="Barbe V."/>
            <person name="Cruveiller S."/>
            <person name="Kunst F."/>
            <person name="Lenoble P."/>
            <person name="Meurice G."/>
            <person name="Sekowska A."/>
            <person name="Vallenet D."/>
            <person name="Wang T."/>
            <person name="Moszer I."/>
            <person name="Medigue C."/>
            <person name="Danchin A."/>
        </authorList>
    </citation>
    <scope>SEQUENCE REVISION TO 187</scope>
</reference>
<organism>
    <name type="scientific">Bacillus subtilis (strain 168)</name>
    <dbReference type="NCBI Taxonomy" id="224308"/>
    <lineage>
        <taxon>Bacteria</taxon>
        <taxon>Bacillati</taxon>
        <taxon>Bacillota</taxon>
        <taxon>Bacilli</taxon>
        <taxon>Bacillales</taxon>
        <taxon>Bacillaceae</taxon>
        <taxon>Bacillus</taxon>
    </lineage>
</organism>
<sequence>MNIQLLQVFLTTAREGSISKAALTLNYAQSNVTNKIQQLENDLQTKLFYRHSRGITLTPPGQILVSYSEKILHTIEEARAAMGESSAPSGPLRIGSMETTAAVWLPQLLAHYNNLYPNVDLNLVTGPTEQQIQAVLHYELNGAFISGPIEHPDLVQEKVLDEEMVLVTSASHPVISSIQDVQTQTMLVFRKGCSYRAKLNHILQEEGLLPIKLMEFGILEAIIGCVSAGLGISLLPRSIIASHEKEGRIRSHTISDKYSFVSTMFIRRKDTLITPALSAFLTHMRDHFQIKRPDQS</sequence>